<protein>
    <recommendedName>
        <fullName>Antitoxin MazE</fullName>
    </recommendedName>
</protein>
<proteinExistence type="inferred from homology"/>
<feature type="chain" id="PRO_0000089650" description="Antitoxin MazE">
    <location>
        <begin position="1"/>
        <end position="82"/>
    </location>
</feature>
<feature type="domain" description="SpoVT-AbrB" evidence="2">
    <location>
        <begin position="4"/>
        <end position="49"/>
    </location>
</feature>
<organism>
    <name type="scientific">Escherichia coli O157:H7</name>
    <dbReference type="NCBI Taxonomy" id="83334"/>
    <lineage>
        <taxon>Bacteria</taxon>
        <taxon>Pseudomonadati</taxon>
        <taxon>Pseudomonadota</taxon>
        <taxon>Gammaproteobacteria</taxon>
        <taxon>Enterobacterales</taxon>
        <taxon>Enterobacteriaceae</taxon>
        <taxon>Escherichia</taxon>
    </lineage>
</organism>
<comment type="function">
    <text evidence="1">Antitoxin component of a type II toxin-antitoxin (TA) system. Labile antitoxin that binds to its cognate MazF endoribonuclease toxin and neutralizes its activity. Both MazE and MazE-MazF bind to the promoter region of the mazE-mazF operon to inhibit their transcription.</text>
</comment>
<comment type="subunit">
    <text evidence="1">Forms a heterohexamer composed of alternating toxin and antitoxin homodimers MazF(2)-MazE(2)-MazF(2) which inhibits the endoribonuclease activity of MazF.</text>
</comment>
<comment type="similarity">
    <text evidence="3">Belongs to the PemI family.</text>
</comment>
<evidence type="ECO:0000250" key="1">
    <source>
        <dbReference type="UniProtKB" id="P0AE72"/>
    </source>
</evidence>
<evidence type="ECO:0000255" key="2">
    <source>
        <dbReference type="PROSITE-ProRule" id="PRU01076"/>
    </source>
</evidence>
<evidence type="ECO:0000305" key="3"/>
<keyword id="KW-0238">DNA-binding</keyword>
<keyword id="KW-1185">Reference proteome</keyword>
<keyword id="KW-1277">Toxin-antitoxin system</keyword>
<accession>P0AE73</accession>
<accession>P18534</accession>
<sequence>MIHSSVKRWGNSPAVRIPATLMQALNLNIDDEVKIDLVDGKLIIEPVRKEPVFTLAELVNDITPENLHENIDWGEPKDKEVW</sequence>
<dbReference type="EMBL" id="AE005174">
    <property type="protein sequence ID" value="AAG57896.1"/>
    <property type="molecule type" value="Genomic_DNA"/>
</dbReference>
<dbReference type="EMBL" id="BA000007">
    <property type="protein sequence ID" value="BAB37066.1"/>
    <property type="molecule type" value="Genomic_DNA"/>
</dbReference>
<dbReference type="PIR" id="C91084">
    <property type="entry name" value="C91084"/>
</dbReference>
<dbReference type="PIR" id="D85929">
    <property type="entry name" value="D85929"/>
</dbReference>
<dbReference type="RefSeq" id="NP_311670.1">
    <property type="nucleotide sequence ID" value="NC_002695.1"/>
</dbReference>
<dbReference type="RefSeq" id="WP_000581937.1">
    <property type="nucleotide sequence ID" value="NZ_VOAI01000003.1"/>
</dbReference>
<dbReference type="BMRB" id="P0AE73"/>
<dbReference type="SMR" id="P0AE73"/>
<dbReference type="STRING" id="155864.Z4098"/>
<dbReference type="GeneID" id="916553"/>
<dbReference type="GeneID" id="93779215"/>
<dbReference type="KEGG" id="ece:Z4098"/>
<dbReference type="KEGG" id="ecs:ECs_3643"/>
<dbReference type="PATRIC" id="fig|386585.9.peg.3807"/>
<dbReference type="eggNOG" id="COG2336">
    <property type="taxonomic scope" value="Bacteria"/>
</dbReference>
<dbReference type="HOGENOM" id="CLU_150554_1_0_6"/>
<dbReference type="OMA" id="AQKWGNS"/>
<dbReference type="Proteomes" id="UP000000558">
    <property type="component" value="Chromosome"/>
</dbReference>
<dbReference type="Proteomes" id="UP000002519">
    <property type="component" value="Chromosome"/>
</dbReference>
<dbReference type="GO" id="GO:0003677">
    <property type="term" value="F:DNA binding"/>
    <property type="evidence" value="ECO:0007669"/>
    <property type="project" value="UniProtKB-KW"/>
</dbReference>
<dbReference type="GO" id="GO:0097351">
    <property type="term" value="F:toxin sequestering activity"/>
    <property type="evidence" value="ECO:0007669"/>
    <property type="project" value="InterPro"/>
</dbReference>
<dbReference type="FunFam" id="2.10.260.10:FF:000002">
    <property type="entry name" value="Antitoxin MazE"/>
    <property type="match status" value="1"/>
</dbReference>
<dbReference type="Gene3D" id="2.10.260.10">
    <property type="match status" value="1"/>
</dbReference>
<dbReference type="InterPro" id="IPR039052">
    <property type="entry name" value="Antitox_PemI-like"/>
</dbReference>
<dbReference type="InterPro" id="IPR007159">
    <property type="entry name" value="SpoVT-AbrB_dom"/>
</dbReference>
<dbReference type="InterPro" id="IPR037914">
    <property type="entry name" value="SpoVT-AbrB_sf"/>
</dbReference>
<dbReference type="NCBIfam" id="NF007312">
    <property type="entry name" value="PRK09798.1"/>
    <property type="match status" value="1"/>
</dbReference>
<dbReference type="PANTHER" id="PTHR40516">
    <property type="entry name" value="ANTITOXIN CHPS-RELATED"/>
    <property type="match status" value="1"/>
</dbReference>
<dbReference type="PANTHER" id="PTHR40516:SF1">
    <property type="entry name" value="ANTITOXIN CHPS-RELATED"/>
    <property type="match status" value="1"/>
</dbReference>
<dbReference type="Pfam" id="PF04014">
    <property type="entry name" value="MazE_antitoxin"/>
    <property type="match status" value="1"/>
</dbReference>
<dbReference type="SMART" id="SM00966">
    <property type="entry name" value="SpoVT_AbrB"/>
    <property type="match status" value="1"/>
</dbReference>
<dbReference type="SUPFAM" id="SSF89447">
    <property type="entry name" value="AbrB/MazE/MraZ-like"/>
    <property type="match status" value="1"/>
</dbReference>
<dbReference type="PROSITE" id="PS51740">
    <property type="entry name" value="SPOVT_ABRB"/>
    <property type="match status" value="1"/>
</dbReference>
<reference key="1">
    <citation type="journal article" date="2001" name="Nature">
        <title>Genome sequence of enterohaemorrhagic Escherichia coli O157:H7.</title>
        <authorList>
            <person name="Perna N.T."/>
            <person name="Plunkett G. III"/>
            <person name="Burland V."/>
            <person name="Mau B."/>
            <person name="Glasner J.D."/>
            <person name="Rose D.J."/>
            <person name="Mayhew G.F."/>
            <person name="Evans P.S."/>
            <person name="Gregor J."/>
            <person name="Kirkpatrick H.A."/>
            <person name="Posfai G."/>
            <person name="Hackett J."/>
            <person name="Klink S."/>
            <person name="Boutin A."/>
            <person name="Shao Y."/>
            <person name="Miller L."/>
            <person name="Grotbeck E.J."/>
            <person name="Davis N.W."/>
            <person name="Lim A."/>
            <person name="Dimalanta E.T."/>
            <person name="Potamousis K."/>
            <person name="Apodaca J."/>
            <person name="Anantharaman T.S."/>
            <person name="Lin J."/>
            <person name="Yen G."/>
            <person name="Schwartz D.C."/>
            <person name="Welch R.A."/>
            <person name="Blattner F.R."/>
        </authorList>
    </citation>
    <scope>NUCLEOTIDE SEQUENCE [LARGE SCALE GENOMIC DNA]</scope>
    <source>
        <strain>O157:H7 / EDL933 / ATCC 700927 / EHEC</strain>
    </source>
</reference>
<reference key="2">
    <citation type="journal article" date="2001" name="DNA Res.">
        <title>Complete genome sequence of enterohemorrhagic Escherichia coli O157:H7 and genomic comparison with a laboratory strain K-12.</title>
        <authorList>
            <person name="Hayashi T."/>
            <person name="Makino K."/>
            <person name="Ohnishi M."/>
            <person name="Kurokawa K."/>
            <person name="Ishii K."/>
            <person name="Yokoyama K."/>
            <person name="Han C.-G."/>
            <person name="Ohtsubo E."/>
            <person name="Nakayama K."/>
            <person name="Murata T."/>
            <person name="Tanaka M."/>
            <person name="Tobe T."/>
            <person name="Iida T."/>
            <person name="Takami H."/>
            <person name="Honda T."/>
            <person name="Sasakawa C."/>
            <person name="Ogasawara N."/>
            <person name="Yasunaga T."/>
            <person name="Kuhara S."/>
            <person name="Shiba T."/>
            <person name="Hattori M."/>
            <person name="Shinagawa H."/>
        </authorList>
    </citation>
    <scope>NUCLEOTIDE SEQUENCE [LARGE SCALE GENOMIC DNA]</scope>
    <source>
        <strain>O157:H7 / Sakai / RIMD 0509952 / EHEC</strain>
    </source>
</reference>
<gene>
    <name type="primary">mazE</name>
    <name type="synonym">chpAI</name>
    <name type="synonym">chpR</name>
    <name type="ordered locus">Z4098</name>
    <name type="ordered locus">ECs3643</name>
</gene>
<name>MAZE_ECO57</name>